<reference key="1">
    <citation type="journal article" date="2002" name="Nucleic Acids Res.">
        <title>Genome sequence of Shigella flexneri 2a: insights into pathogenicity through comparison with genomes of Escherichia coli K12 and O157.</title>
        <authorList>
            <person name="Jin Q."/>
            <person name="Yuan Z."/>
            <person name="Xu J."/>
            <person name="Wang Y."/>
            <person name="Shen Y."/>
            <person name="Lu W."/>
            <person name="Wang J."/>
            <person name="Liu H."/>
            <person name="Yang J."/>
            <person name="Yang F."/>
            <person name="Zhang X."/>
            <person name="Zhang J."/>
            <person name="Yang G."/>
            <person name="Wu H."/>
            <person name="Qu D."/>
            <person name="Dong J."/>
            <person name="Sun L."/>
            <person name="Xue Y."/>
            <person name="Zhao A."/>
            <person name="Gao Y."/>
            <person name="Zhu J."/>
            <person name="Kan B."/>
            <person name="Ding K."/>
            <person name="Chen S."/>
            <person name="Cheng H."/>
            <person name="Yao Z."/>
            <person name="He B."/>
            <person name="Chen R."/>
            <person name="Ma D."/>
            <person name="Qiang B."/>
            <person name="Wen Y."/>
            <person name="Hou Y."/>
            <person name="Yu J."/>
        </authorList>
    </citation>
    <scope>NUCLEOTIDE SEQUENCE [LARGE SCALE GENOMIC DNA]</scope>
    <source>
        <strain>301 / Serotype 2a</strain>
    </source>
</reference>
<reference key="2">
    <citation type="journal article" date="2003" name="Infect. Immun.">
        <title>Complete genome sequence and comparative genomics of Shigella flexneri serotype 2a strain 2457T.</title>
        <authorList>
            <person name="Wei J."/>
            <person name="Goldberg M.B."/>
            <person name="Burland V."/>
            <person name="Venkatesan M.M."/>
            <person name="Deng W."/>
            <person name="Fournier G."/>
            <person name="Mayhew G.F."/>
            <person name="Plunkett G. III"/>
            <person name="Rose D.J."/>
            <person name="Darling A."/>
            <person name="Mau B."/>
            <person name="Perna N.T."/>
            <person name="Payne S.M."/>
            <person name="Runyen-Janecky L.J."/>
            <person name="Zhou S."/>
            <person name="Schwartz D.C."/>
            <person name="Blattner F.R."/>
        </authorList>
    </citation>
    <scope>NUCLEOTIDE SEQUENCE [LARGE SCALE GENOMIC DNA]</scope>
    <source>
        <strain>ATCC 700930 / 2457T / Serotype 2a</strain>
    </source>
</reference>
<dbReference type="EC" id="2.1.1.63" evidence="1"/>
<dbReference type="EMBL" id="AE005674">
    <property type="protein sequence ID" value="AAN43397.1"/>
    <property type="molecule type" value="Genomic_DNA"/>
</dbReference>
<dbReference type="EMBL" id="AE014073">
    <property type="protein sequence ID" value="AAP16837.1"/>
    <property type="molecule type" value="Genomic_DNA"/>
</dbReference>
<dbReference type="RefSeq" id="NP_707690.1">
    <property type="nucleotide sequence ID" value="NC_004337.2"/>
</dbReference>
<dbReference type="RefSeq" id="WP_000945011.1">
    <property type="nucleotide sequence ID" value="NZ_WPGW01000191.1"/>
</dbReference>
<dbReference type="SMR" id="P0AFH1"/>
<dbReference type="STRING" id="198214.SF1835"/>
<dbReference type="PaxDb" id="198214-SF1835"/>
<dbReference type="GeneID" id="1025017"/>
<dbReference type="KEGG" id="sfl:SF1835"/>
<dbReference type="KEGG" id="sfx:S1435"/>
<dbReference type="PATRIC" id="fig|198214.7.peg.2183"/>
<dbReference type="HOGENOM" id="CLU_000445_52_2_6"/>
<dbReference type="Proteomes" id="UP000001006">
    <property type="component" value="Chromosome"/>
</dbReference>
<dbReference type="Proteomes" id="UP000002673">
    <property type="component" value="Chromosome"/>
</dbReference>
<dbReference type="GO" id="GO:0005737">
    <property type="term" value="C:cytoplasm"/>
    <property type="evidence" value="ECO:0007669"/>
    <property type="project" value="UniProtKB-SubCell"/>
</dbReference>
<dbReference type="GO" id="GO:0003908">
    <property type="term" value="F:methylated-DNA-[protein]-cysteine S-methyltransferase activity"/>
    <property type="evidence" value="ECO:0007669"/>
    <property type="project" value="UniProtKB-UniRule"/>
</dbReference>
<dbReference type="GO" id="GO:0006307">
    <property type="term" value="P:DNA alkylation repair"/>
    <property type="evidence" value="ECO:0007669"/>
    <property type="project" value="UniProtKB-UniRule"/>
</dbReference>
<dbReference type="GO" id="GO:0032259">
    <property type="term" value="P:methylation"/>
    <property type="evidence" value="ECO:0007669"/>
    <property type="project" value="UniProtKB-KW"/>
</dbReference>
<dbReference type="CDD" id="cd06445">
    <property type="entry name" value="ATase"/>
    <property type="match status" value="1"/>
</dbReference>
<dbReference type="FunFam" id="1.10.10.10:FF:000337">
    <property type="entry name" value="Methylated-DNA--protein-cysteine methyltransferase"/>
    <property type="match status" value="1"/>
</dbReference>
<dbReference type="Gene3D" id="1.10.10.10">
    <property type="entry name" value="Winged helix-like DNA-binding domain superfamily/Winged helix DNA-binding domain"/>
    <property type="match status" value="1"/>
</dbReference>
<dbReference type="HAMAP" id="MF_00772">
    <property type="entry name" value="OGT"/>
    <property type="match status" value="1"/>
</dbReference>
<dbReference type="InterPro" id="IPR001497">
    <property type="entry name" value="MethylDNA_cys_MeTrfase_AS"/>
</dbReference>
<dbReference type="InterPro" id="IPR014048">
    <property type="entry name" value="MethylDNA_cys_MeTrfase_DNA-bd"/>
</dbReference>
<dbReference type="InterPro" id="IPR036217">
    <property type="entry name" value="MethylDNA_cys_MeTrfase_DNAb"/>
</dbReference>
<dbReference type="InterPro" id="IPR008332">
    <property type="entry name" value="MethylG_MeTrfase_N"/>
</dbReference>
<dbReference type="InterPro" id="IPR023546">
    <property type="entry name" value="MGMT"/>
</dbReference>
<dbReference type="InterPro" id="IPR036631">
    <property type="entry name" value="MGMT_N_sf"/>
</dbReference>
<dbReference type="InterPro" id="IPR036388">
    <property type="entry name" value="WH-like_DNA-bd_sf"/>
</dbReference>
<dbReference type="NCBIfam" id="TIGR00589">
    <property type="entry name" value="ogt"/>
    <property type="match status" value="1"/>
</dbReference>
<dbReference type="NCBIfam" id="NF007626">
    <property type="entry name" value="PRK10286.1"/>
    <property type="match status" value="1"/>
</dbReference>
<dbReference type="PANTHER" id="PTHR10815">
    <property type="entry name" value="METHYLATED-DNA--PROTEIN-CYSTEINE METHYLTRANSFERASE"/>
    <property type="match status" value="1"/>
</dbReference>
<dbReference type="PANTHER" id="PTHR10815:SF5">
    <property type="entry name" value="METHYLATED-DNA--PROTEIN-CYSTEINE METHYLTRANSFERASE"/>
    <property type="match status" value="1"/>
</dbReference>
<dbReference type="Pfam" id="PF01035">
    <property type="entry name" value="DNA_binding_1"/>
    <property type="match status" value="1"/>
</dbReference>
<dbReference type="Pfam" id="PF02870">
    <property type="entry name" value="Methyltransf_1N"/>
    <property type="match status" value="1"/>
</dbReference>
<dbReference type="SUPFAM" id="SSF53155">
    <property type="entry name" value="Methylated DNA-protein cysteine methyltransferase domain"/>
    <property type="match status" value="1"/>
</dbReference>
<dbReference type="SUPFAM" id="SSF46767">
    <property type="entry name" value="Methylated DNA-protein cysteine methyltransferase, C-terminal domain"/>
    <property type="match status" value="1"/>
</dbReference>
<dbReference type="PROSITE" id="PS00374">
    <property type="entry name" value="MGMT"/>
    <property type="match status" value="1"/>
</dbReference>
<feature type="chain" id="PRO_0000139373" description="Methylated-DNA--protein-cysteine methyltransferase">
    <location>
        <begin position="1"/>
        <end position="171"/>
    </location>
</feature>
<feature type="active site" description="Nucleophile; methyl group acceptor" evidence="1">
    <location>
        <position position="139"/>
    </location>
</feature>
<evidence type="ECO:0000255" key="1">
    <source>
        <dbReference type="HAMAP-Rule" id="MF_00772"/>
    </source>
</evidence>
<protein>
    <recommendedName>
        <fullName evidence="1">Methylated-DNA--protein-cysteine methyltransferase</fullName>
        <ecNumber evidence="1">2.1.1.63</ecNumber>
    </recommendedName>
    <alternativeName>
        <fullName evidence="1">6-O-methylguanine-DNA methyltransferase</fullName>
        <shortName evidence="1">MGMT</shortName>
    </alternativeName>
    <alternativeName>
        <fullName evidence="1">O-6-methylguanine-DNA-alkyltransferase</fullName>
    </alternativeName>
</protein>
<proteinExistence type="inferred from homology"/>
<keyword id="KW-0963">Cytoplasm</keyword>
<keyword id="KW-0227">DNA damage</keyword>
<keyword id="KW-0234">DNA repair</keyword>
<keyword id="KW-0489">Methyltransferase</keyword>
<keyword id="KW-1185">Reference proteome</keyword>
<keyword id="KW-0808">Transferase</keyword>
<accession>P0AFH1</accession>
<accession>P09168</accession>
<accession>P78284</accession>
<name>OGT_SHIFL</name>
<organism>
    <name type="scientific">Shigella flexneri</name>
    <dbReference type="NCBI Taxonomy" id="623"/>
    <lineage>
        <taxon>Bacteria</taxon>
        <taxon>Pseudomonadati</taxon>
        <taxon>Pseudomonadota</taxon>
        <taxon>Gammaproteobacteria</taxon>
        <taxon>Enterobacterales</taxon>
        <taxon>Enterobacteriaceae</taxon>
        <taxon>Shigella</taxon>
    </lineage>
</organism>
<comment type="function">
    <text evidence="1">Involved in the cellular defense against the biological effects of O6-methylguanine (O6-MeG) and O4-methylthymine (O4-MeT) in DNA. Repairs the methylated nucleobase in DNA by stoichiometrically transferring the methyl group to a cysteine residue in the enzyme. This is a suicide reaction: the enzyme is irreversibly inactivated.</text>
</comment>
<comment type="catalytic activity">
    <reaction evidence="1">
        <text>a 6-O-methyl-2'-deoxyguanosine in DNA + L-cysteinyl-[protein] = S-methyl-L-cysteinyl-[protein] + a 2'-deoxyguanosine in DNA</text>
        <dbReference type="Rhea" id="RHEA:24000"/>
        <dbReference type="Rhea" id="RHEA-COMP:10131"/>
        <dbReference type="Rhea" id="RHEA-COMP:10132"/>
        <dbReference type="Rhea" id="RHEA-COMP:11367"/>
        <dbReference type="Rhea" id="RHEA-COMP:11368"/>
        <dbReference type="ChEBI" id="CHEBI:29950"/>
        <dbReference type="ChEBI" id="CHEBI:82612"/>
        <dbReference type="ChEBI" id="CHEBI:85445"/>
        <dbReference type="ChEBI" id="CHEBI:85448"/>
        <dbReference type="EC" id="2.1.1.63"/>
    </reaction>
</comment>
<comment type="catalytic activity">
    <reaction evidence="1">
        <text>a 4-O-methyl-thymidine in DNA + L-cysteinyl-[protein] = a thymidine in DNA + S-methyl-L-cysteinyl-[protein]</text>
        <dbReference type="Rhea" id="RHEA:53428"/>
        <dbReference type="Rhea" id="RHEA-COMP:10131"/>
        <dbReference type="Rhea" id="RHEA-COMP:10132"/>
        <dbReference type="Rhea" id="RHEA-COMP:13555"/>
        <dbReference type="Rhea" id="RHEA-COMP:13556"/>
        <dbReference type="ChEBI" id="CHEBI:29950"/>
        <dbReference type="ChEBI" id="CHEBI:82612"/>
        <dbReference type="ChEBI" id="CHEBI:137386"/>
        <dbReference type="ChEBI" id="CHEBI:137387"/>
        <dbReference type="EC" id="2.1.1.63"/>
    </reaction>
</comment>
<comment type="subcellular location">
    <subcellularLocation>
        <location evidence="1">Cytoplasm</location>
    </subcellularLocation>
</comment>
<comment type="miscellaneous">
    <text>This enzyme catalyzes only one turnover and therefore is not strictly catalytic. According to one definition, an enzyme is a biocatalyst that acts repeatedly and over many reaction cycles.</text>
</comment>
<comment type="similarity">
    <text evidence="1">Belongs to the MGMT family.</text>
</comment>
<sequence>MLRLLEEKIATPLGPLWVICDEQFRLRAVEWEEYSERMVQLLDIHYRKEGYERISATNPGGLSDKLREYFAGNLSIIDTLPTATGGTPFQREVWKTLRTIPCGQVMHYGQLAEQLGRPGAARAVGAANGSNPISIVVPCHRVIGRNGTMTGYAGGVQRKEWLLRHEGYLLL</sequence>
<gene>
    <name evidence="1" type="primary">ogt</name>
    <name type="ordered locus">SF1835</name>
    <name type="ordered locus">S1435</name>
</gene>